<gene>
    <name evidence="1" type="primary">thyA</name>
    <name type="ordered locus">YPN_2988</name>
    <name type="ORF">YP516_3384</name>
</gene>
<feature type="chain" id="PRO_1000000707" description="Thymidylate synthase">
    <location>
        <begin position="1"/>
        <end position="264"/>
    </location>
</feature>
<feature type="active site" description="Nucleophile" evidence="1">
    <location>
        <position position="146"/>
    </location>
</feature>
<feature type="binding site" description="in other chain" evidence="1">
    <location>
        <position position="21"/>
    </location>
    <ligand>
        <name>dUMP</name>
        <dbReference type="ChEBI" id="CHEBI:246422"/>
        <note>ligand shared between dimeric partners</note>
    </ligand>
</feature>
<feature type="binding site" evidence="1">
    <location>
        <position position="51"/>
    </location>
    <ligand>
        <name>(6R)-5,10-methylene-5,6,7,8-tetrahydrofolate</name>
        <dbReference type="ChEBI" id="CHEBI:15636"/>
    </ligand>
</feature>
<feature type="binding site" evidence="1">
    <location>
        <begin position="126"/>
        <end position="127"/>
    </location>
    <ligand>
        <name>dUMP</name>
        <dbReference type="ChEBI" id="CHEBI:246422"/>
        <note>ligand shared between dimeric partners</note>
    </ligand>
</feature>
<feature type="binding site" description="in other chain" evidence="1">
    <location>
        <begin position="166"/>
        <end position="169"/>
    </location>
    <ligand>
        <name>dUMP</name>
        <dbReference type="ChEBI" id="CHEBI:246422"/>
        <note>ligand shared between dimeric partners</note>
    </ligand>
</feature>
<feature type="binding site" evidence="1">
    <location>
        <position position="169"/>
    </location>
    <ligand>
        <name>(6R)-5,10-methylene-5,6,7,8-tetrahydrofolate</name>
        <dbReference type="ChEBI" id="CHEBI:15636"/>
    </ligand>
</feature>
<feature type="binding site" description="in other chain" evidence="1">
    <location>
        <position position="177"/>
    </location>
    <ligand>
        <name>dUMP</name>
        <dbReference type="ChEBI" id="CHEBI:246422"/>
        <note>ligand shared between dimeric partners</note>
    </ligand>
</feature>
<feature type="binding site" description="in other chain" evidence="1">
    <location>
        <begin position="207"/>
        <end position="209"/>
    </location>
    <ligand>
        <name>dUMP</name>
        <dbReference type="ChEBI" id="CHEBI:246422"/>
        <note>ligand shared between dimeric partners</note>
    </ligand>
</feature>
<feature type="binding site" evidence="1">
    <location>
        <position position="263"/>
    </location>
    <ligand>
        <name>(6R)-5,10-methylene-5,6,7,8-tetrahydrofolate</name>
        <dbReference type="ChEBI" id="CHEBI:15636"/>
    </ligand>
</feature>
<reference key="1">
    <citation type="journal article" date="2006" name="J. Bacteriol.">
        <title>Complete genome sequence of Yersinia pestis strains Antiqua and Nepal516: evidence of gene reduction in an emerging pathogen.</title>
        <authorList>
            <person name="Chain P.S.G."/>
            <person name="Hu P."/>
            <person name="Malfatti S.A."/>
            <person name="Radnedge L."/>
            <person name="Larimer F."/>
            <person name="Vergez L.M."/>
            <person name="Worsham P."/>
            <person name="Chu M.C."/>
            <person name="Andersen G.L."/>
        </authorList>
    </citation>
    <scope>NUCLEOTIDE SEQUENCE [LARGE SCALE GENOMIC DNA]</scope>
    <source>
        <strain>Nepal516</strain>
    </source>
</reference>
<reference key="2">
    <citation type="submission" date="2009-04" db="EMBL/GenBank/DDBJ databases">
        <title>Yersinia pestis Nepal516A whole genome shotgun sequencing project.</title>
        <authorList>
            <person name="Plunkett G. III"/>
            <person name="Anderson B.D."/>
            <person name="Baumler D.J."/>
            <person name="Burland V."/>
            <person name="Cabot E.L."/>
            <person name="Glasner J.D."/>
            <person name="Mau B."/>
            <person name="Neeno-Eckwall E."/>
            <person name="Perna N.T."/>
            <person name="Munk A.C."/>
            <person name="Tapia R."/>
            <person name="Green L.D."/>
            <person name="Rogers Y.C."/>
            <person name="Detter J.C."/>
            <person name="Bruce D.C."/>
            <person name="Brettin T.S."/>
        </authorList>
    </citation>
    <scope>NUCLEOTIDE SEQUENCE [LARGE SCALE GENOMIC DNA]</scope>
    <source>
        <strain>Nepal516</strain>
    </source>
</reference>
<comment type="function">
    <text evidence="1">Catalyzes the reductive methylation of 2'-deoxyuridine-5'-monophosphate (dUMP) to 2'-deoxythymidine-5'-monophosphate (dTMP) while utilizing 5,10-methylenetetrahydrofolate (mTHF) as the methyl donor and reductant in the reaction, yielding dihydrofolate (DHF) as a by-product. This enzymatic reaction provides an intracellular de novo source of dTMP, an essential precursor for DNA biosynthesis.</text>
</comment>
<comment type="catalytic activity">
    <reaction evidence="1">
        <text>dUMP + (6R)-5,10-methylene-5,6,7,8-tetrahydrofolate = 7,8-dihydrofolate + dTMP</text>
        <dbReference type="Rhea" id="RHEA:12104"/>
        <dbReference type="ChEBI" id="CHEBI:15636"/>
        <dbReference type="ChEBI" id="CHEBI:57451"/>
        <dbReference type="ChEBI" id="CHEBI:63528"/>
        <dbReference type="ChEBI" id="CHEBI:246422"/>
        <dbReference type="EC" id="2.1.1.45"/>
    </reaction>
</comment>
<comment type="pathway">
    <text evidence="1">Pyrimidine metabolism; dTTP biosynthesis.</text>
</comment>
<comment type="subunit">
    <text evidence="1">Homodimer.</text>
</comment>
<comment type="subcellular location">
    <subcellularLocation>
        <location evidence="1">Cytoplasm</location>
    </subcellularLocation>
</comment>
<comment type="similarity">
    <text evidence="1">Belongs to the thymidylate synthase family. Bacterial-type ThyA subfamily.</text>
</comment>
<organism>
    <name type="scientific">Yersinia pestis bv. Antiqua (strain Nepal516)</name>
    <dbReference type="NCBI Taxonomy" id="377628"/>
    <lineage>
        <taxon>Bacteria</taxon>
        <taxon>Pseudomonadati</taxon>
        <taxon>Pseudomonadota</taxon>
        <taxon>Gammaproteobacteria</taxon>
        <taxon>Enterobacterales</taxon>
        <taxon>Yersiniaceae</taxon>
        <taxon>Yersinia</taxon>
    </lineage>
</organism>
<name>TYSY_YERPN</name>
<keyword id="KW-0963">Cytoplasm</keyword>
<keyword id="KW-0489">Methyltransferase</keyword>
<keyword id="KW-0545">Nucleotide biosynthesis</keyword>
<keyword id="KW-0808">Transferase</keyword>
<accession>Q1CFB5</accession>
<accession>C4GX14</accession>
<proteinExistence type="inferred from homology"/>
<sequence>MKQYLDLMKKVLEEGTPKADRTGTGTLSIFGHQMRFNLQDGFPLVTTKRCHLRSIIHELLWFLNGDTNIAYLKENNVSIWDEWADENGDLGPIYGKQWRAWGAADGRKIDQLSNVVNQLKQDPDSRRIIVSAWNVGELDQMALAPCHAFFQFYVADGKLSCQLYQRSCDVFLGLPFNIASYALLVHMMAQQCDLAVGDFVWTGGDTHLYSNHIDQAHLQLSREPRVLPKLVIKRKPDSLFDYHFDDFDIEGYDPHPGIKAPIAI</sequence>
<evidence type="ECO:0000255" key="1">
    <source>
        <dbReference type="HAMAP-Rule" id="MF_00008"/>
    </source>
</evidence>
<dbReference type="EC" id="2.1.1.45" evidence="1"/>
<dbReference type="EMBL" id="CP000305">
    <property type="protein sequence ID" value="ABG19315.1"/>
    <property type="molecule type" value="Genomic_DNA"/>
</dbReference>
<dbReference type="EMBL" id="ACNQ01000017">
    <property type="protein sequence ID" value="EEO75464.1"/>
    <property type="molecule type" value="Genomic_DNA"/>
</dbReference>
<dbReference type="RefSeq" id="WP_002211384.1">
    <property type="nucleotide sequence ID" value="NZ_ACNQ01000017.1"/>
</dbReference>
<dbReference type="SMR" id="Q1CFB5"/>
<dbReference type="GeneID" id="57973851"/>
<dbReference type="KEGG" id="ypn:YPN_2988"/>
<dbReference type="HOGENOM" id="CLU_021669_0_0_6"/>
<dbReference type="UniPathway" id="UPA00575"/>
<dbReference type="Proteomes" id="UP000008936">
    <property type="component" value="Chromosome"/>
</dbReference>
<dbReference type="GO" id="GO:0005829">
    <property type="term" value="C:cytosol"/>
    <property type="evidence" value="ECO:0007669"/>
    <property type="project" value="TreeGrafter"/>
</dbReference>
<dbReference type="GO" id="GO:0004799">
    <property type="term" value="F:thymidylate synthase activity"/>
    <property type="evidence" value="ECO:0007669"/>
    <property type="project" value="UniProtKB-UniRule"/>
</dbReference>
<dbReference type="GO" id="GO:0006231">
    <property type="term" value="P:dTMP biosynthetic process"/>
    <property type="evidence" value="ECO:0007669"/>
    <property type="project" value="UniProtKB-UniRule"/>
</dbReference>
<dbReference type="GO" id="GO:0006235">
    <property type="term" value="P:dTTP biosynthetic process"/>
    <property type="evidence" value="ECO:0007669"/>
    <property type="project" value="UniProtKB-UniRule"/>
</dbReference>
<dbReference type="GO" id="GO:0032259">
    <property type="term" value="P:methylation"/>
    <property type="evidence" value="ECO:0007669"/>
    <property type="project" value="UniProtKB-KW"/>
</dbReference>
<dbReference type="CDD" id="cd00351">
    <property type="entry name" value="TS_Pyrimidine_HMase"/>
    <property type="match status" value="1"/>
</dbReference>
<dbReference type="FunFam" id="3.30.572.10:FF:000001">
    <property type="entry name" value="Thymidylate synthase"/>
    <property type="match status" value="1"/>
</dbReference>
<dbReference type="Gene3D" id="3.30.572.10">
    <property type="entry name" value="Thymidylate synthase/dCMP hydroxymethylase domain"/>
    <property type="match status" value="1"/>
</dbReference>
<dbReference type="HAMAP" id="MF_00008">
    <property type="entry name" value="Thymidy_synth_bact"/>
    <property type="match status" value="1"/>
</dbReference>
<dbReference type="InterPro" id="IPR045097">
    <property type="entry name" value="Thymidate_synth/dCMP_Mease"/>
</dbReference>
<dbReference type="InterPro" id="IPR023451">
    <property type="entry name" value="Thymidate_synth/dCMP_Mease_dom"/>
</dbReference>
<dbReference type="InterPro" id="IPR036926">
    <property type="entry name" value="Thymidate_synth/dCMP_Mease_sf"/>
</dbReference>
<dbReference type="InterPro" id="IPR000398">
    <property type="entry name" value="Thymidylate_synthase"/>
</dbReference>
<dbReference type="InterPro" id="IPR020940">
    <property type="entry name" value="Thymidylate_synthase_AS"/>
</dbReference>
<dbReference type="NCBIfam" id="NF002497">
    <property type="entry name" value="PRK01827.1-3"/>
    <property type="match status" value="1"/>
</dbReference>
<dbReference type="NCBIfam" id="NF002499">
    <property type="entry name" value="PRK01827.1-5"/>
    <property type="match status" value="1"/>
</dbReference>
<dbReference type="NCBIfam" id="TIGR03284">
    <property type="entry name" value="thym_sym"/>
    <property type="match status" value="2"/>
</dbReference>
<dbReference type="PANTHER" id="PTHR11548:SF9">
    <property type="entry name" value="THYMIDYLATE SYNTHASE"/>
    <property type="match status" value="1"/>
</dbReference>
<dbReference type="PANTHER" id="PTHR11548">
    <property type="entry name" value="THYMIDYLATE SYNTHASE 1"/>
    <property type="match status" value="1"/>
</dbReference>
<dbReference type="Pfam" id="PF00303">
    <property type="entry name" value="Thymidylat_synt"/>
    <property type="match status" value="1"/>
</dbReference>
<dbReference type="PRINTS" id="PR00108">
    <property type="entry name" value="THYMDSNTHASE"/>
</dbReference>
<dbReference type="SUPFAM" id="SSF55831">
    <property type="entry name" value="Thymidylate synthase/dCMP hydroxymethylase"/>
    <property type="match status" value="1"/>
</dbReference>
<dbReference type="PROSITE" id="PS00091">
    <property type="entry name" value="THYMIDYLATE_SYNTHASE"/>
    <property type="match status" value="1"/>
</dbReference>
<protein>
    <recommendedName>
        <fullName evidence="1">Thymidylate synthase</fullName>
        <shortName evidence="1">TS</shortName>
        <shortName evidence="1">TSase</shortName>
        <ecNumber evidence="1">2.1.1.45</ecNumber>
    </recommendedName>
</protein>